<keyword id="KW-0963">Cytoplasm</keyword>
<keyword id="KW-0324">Glycolysis</keyword>
<keyword id="KW-0456">Lyase</keyword>
<keyword id="KW-0460">Magnesium</keyword>
<keyword id="KW-0479">Metal-binding</keyword>
<keyword id="KW-0964">Secreted</keyword>
<dbReference type="EC" id="4.2.1.11" evidence="1"/>
<dbReference type="EMBL" id="AJ248288">
    <property type="protein sequence ID" value="CAB50622.1"/>
    <property type="status" value="ALT_INIT"/>
    <property type="molecule type" value="Genomic_DNA"/>
</dbReference>
<dbReference type="EMBL" id="HE613800">
    <property type="protein sequence ID" value="CCE71189.1"/>
    <property type="molecule type" value="Genomic_DNA"/>
</dbReference>
<dbReference type="PIR" id="H75022">
    <property type="entry name" value="H75022"/>
</dbReference>
<dbReference type="RefSeq" id="WP_048147178.1">
    <property type="nucleotide sequence ID" value="NC_000868.1"/>
</dbReference>
<dbReference type="SMR" id="Q9UXZ0"/>
<dbReference type="STRING" id="272844.PAB1126"/>
<dbReference type="KEGG" id="pab:PAB1126"/>
<dbReference type="PATRIC" id="fig|272844.11.peg.1834"/>
<dbReference type="eggNOG" id="arCOG01169">
    <property type="taxonomic scope" value="Archaea"/>
</dbReference>
<dbReference type="HOGENOM" id="CLU_031223_2_1_2"/>
<dbReference type="OrthoDB" id="8680at2157"/>
<dbReference type="PhylomeDB" id="Q9UXZ0"/>
<dbReference type="UniPathway" id="UPA00109">
    <property type="reaction ID" value="UER00187"/>
</dbReference>
<dbReference type="Proteomes" id="UP000000810">
    <property type="component" value="Chromosome"/>
</dbReference>
<dbReference type="Proteomes" id="UP000009139">
    <property type="component" value="Chromosome"/>
</dbReference>
<dbReference type="GO" id="GO:0009986">
    <property type="term" value="C:cell surface"/>
    <property type="evidence" value="ECO:0007669"/>
    <property type="project" value="UniProtKB-SubCell"/>
</dbReference>
<dbReference type="GO" id="GO:0005576">
    <property type="term" value="C:extracellular region"/>
    <property type="evidence" value="ECO:0007669"/>
    <property type="project" value="UniProtKB-SubCell"/>
</dbReference>
<dbReference type="GO" id="GO:0000015">
    <property type="term" value="C:phosphopyruvate hydratase complex"/>
    <property type="evidence" value="ECO:0007669"/>
    <property type="project" value="InterPro"/>
</dbReference>
<dbReference type="GO" id="GO:0000287">
    <property type="term" value="F:magnesium ion binding"/>
    <property type="evidence" value="ECO:0007669"/>
    <property type="project" value="UniProtKB-UniRule"/>
</dbReference>
<dbReference type="GO" id="GO:0004634">
    <property type="term" value="F:phosphopyruvate hydratase activity"/>
    <property type="evidence" value="ECO:0007669"/>
    <property type="project" value="UniProtKB-UniRule"/>
</dbReference>
<dbReference type="GO" id="GO:0006096">
    <property type="term" value="P:glycolytic process"/>
    <property type="evidence" value="ECO:0007669"/>
    <property type="project" value="UniProtKB-UniRule"/>
</dbReference>
<dbReference type="CDD" id="cd03313">
    <property type="entry name" value="enolase"/>
    <property type="match status" value="1"/>
</dbReference>
<dbReference type="FunFam" id="3.30.390.10:FF:000001">
    <property type="entry name" value="Enolase"/>
    <property type="match status" value="1"/>
</dbReference>
<dbReference type="Gene3D" id="3.20.20.120">
    <property type="entry name" value="Enolase-like C-terminal domain"/>
    <property type="match status" value="1"/>
</dbReference>
<dbReference type="Gene3D" id="3.30.390.10">
    <property type="entry name" value="Enolase-like, N-terminal domain"/>
    <property type="match status" value="1"/>
</dbReference>
<dbReference type="HAMAP" id="MF_00318">
    <property type="entry name" value="Enolase"/>
    <property type="match status" value="1"/>
</dbReference>
<dbReference type="InterPro" id="IPR000941">
    <property type="entry name" value="Enolase"/>
</dbReference>
<dbReference type="InterPro" id="IPR036849">
    <property type="entry name" value="Enolase-like_C_sf"/>
</dbReference>
<dbReference type="InterPro" id="IPR029017">
    <property type="entry name" value="Enolase-like_N"/>
</dbReference>
<dbReference type="InterPro" id="IPR020810">
    <property type="entry name" value="Enolase_C"/>
</dbReference>
<dbReference type="InterPro" id="IPR020809">
    <property type="entry name" value="Enolase_CS"/>
</dbReference>
<dbReference type="InterPro" id="IPR020811">
    <property type="entry name" value="Enolase_N"/>
</dbReference>
<dbReference type="NCBIfam" id="TIGR01060">
    <property type="entry name" value="eno"/>
    <property type="match status" value="1"/>
</dbReference>
<dbReference type="PANTHER" id="PTHR11902">
    <property type="entry name" value="ENOLASE"/>
    <property type="match status" value="1"/>
</dbReference>
<dbReference type="PANTHER" id="PTHR11902:SF1">
    <property type="entry name" value="ENOLASE"/>
    <property type="match status" value="1"/>
</dbReference>
<dbReference type="Pfam" id="PF00113">
    <property type="entry name" value="Enolase_C"/>
    <property type="match status" value="1"/>
</dbReference>
<dbReference type="Pfam" id="PF03952">
    <property type="entry name" value="Enolase_N"/>
    <property type="match status" value="1"/>
</dbReference>
<dbReference type="PIRSF" id="PIRSF001400">
    <property type="entry name" value="Enolase"/>
    <property type="match status" value="1"/>
</dbReference>
<dbReference type="PRINTS" id="PR00148">
    <property type="entry name" value="ENOLASE"/>
</dbReference>
<dbReference type="SFLD" id="SFLDS00001">
    <property type="entry name" value="Enolase"/>
    <property type="match status" value="1"/>
</dbReference>
<dbReference type="SFLD" id="SFLDF00002">
    <property type="entry name" value="enolase"/>
    <property type="match status" value="1"/>
</dbReference>
<dbReference type="SMART" id="SM01192">
    <property type="entry name" value="Enolase_C"/>
    <property type="match status" value="1"/>
</dbReference>
<dbReference type="SMART" id="SM01193">
    <property type="entry name" value="Enolase_N"/>
    <property type="match status" value="1"/>
</dbReference>
<dbReference type="SUPFAM" id="SSF51604">
    <property type="entry name" value="Enolase C-terminal domain-like"/>
    <property type="match status" value="1"/>
</dbReference>
<dbReference type="SUPFAM" id="SSF54826">
    <property type="entry name" value="Enolase N-terminal domain-like"/>
    <property type="match status" value="1"/>
</dbReference>
<dbReference type="PROSITE" id="PS00164">
    <property type="entry name" value="ENOLASE"/>
    <property type="match status" value="1"/>
</dbReference>
<sequence>MENPYEIVAVIAREILDSRGNPTVEVDVHTPISMGRAAVPSGASTGTHEAVELRDGGKRYHGKGVRRAVENVNKIIAPELVGMDVRWQREIDRLLIELDGTENKSNLGANAILAVSLAVAKAAANALELPLYQYLGGVNAYVLPVPLSNVINGGVHAGNDLDFQEFMIMPIGANSFREAIRWVSETYHVLKKVIAEKYGKNAVNVGDEGGFAPPMKEVTEPLDVLIKAIEEAGYKPGEEIALALDAASSEFYKDGKYIVSGKEYTREELLELYKELTSTYPIVSIEDPFHEEDWEGFVMITRELGKKVQIVGDDLFVTNPKRLKKGIEMGAANALLLKVNQIGTLTEAMDAAYMAFRAGYGVVVSHRSGETEDATIADLAVALNAGQIKTGAPARSDRNAKYNQLIRIEEELEGVAVYAGKNFRKVFF</sequence>
<evidence type="ECO:0000255" key="1">
    <source>
        <dbReference type="HAMAP-Rule" id="MF_00318"/>
    </source>
</evidence>
<evidence type="ECO:0000305" key="2"/>
<gene>
    <name evidence="1" type="primary">eno</name>
    <name type="ordered locus">PYRAB17170</name>
    <name type="ORF">PAB1126</name>
</gene>
<comment type="function">
    <text evidence="1">Catalyzes the reversible conversion of 2-phosphoglycerate (2-PG) into phosphoenolpyruvate (PEP). It is essential for the degradation of carbohydrates via glycolysis.</text>
</comment>
<comment type="catalytic activity">
    <reaction evidence="1">
        <text>(2R)-2-phosphoglycerate = phosphoenolpyruvate + H2O</text>
        <dbReference type="Rhea" id="RHEA:10164"/>
        <dbReference type="ChEBI" id="CHEBI:15377"/>
        <dbReference type="ChEBI" id="CHEBI:58289"/>
        <dbReference type="ChEBI" id="CHEBI:58702"/>
        <dbReference type="EC" id="4.2.1.11"/>
    </reaction>
</comment>
<comment type="cofactor">
    <cofactor evidence="1">
        <name>Mg(2+)</name>
        <dbReference type="ChEBI" id="CHEBI:18420"/>
    </cofactor>
    <text evidence="1">Binds a second Mg(2+) ion via substrate during catalysis.</text>
</comment>
<comment type="pathway">
    <text evidence="1">Carbohydrate degradation; glycolysis; pyruvate from D-glyceraldehyde 3-phosphate: step 4/5.</text>
</comment>
<comment type="subcellular location">
    <subcellularLocation>
        <location evidence="1">Cytoplasm</location>
    </subcellularLocation>
    <subcellularLocation>
        <location evidence="1">Secreted</location>
    </subcellularLocation>
    <subcellularLocation>
        <location evidence="1">Cell surface</location>
    </subcellularLocation>
    <text evidence="1">Fractions of enolase are present in both the cytoplasm and on the cell surface.</text>
</comment>
<comment type="similarity">
    <text evidence="1">Belongs to the enolase family.</text>
</comment>
<comment type="sequence caution" evidence="2">
    <conflict type="erroneous initiation">
        <sequence resource="EMBL-CDS" id="CAB50622"/>
    </conflict>
    <text>Extended N-terminus.</text>
</comment>
<organism>
    <name type="scientific">Pyrococcus abyssi (strain GE5 / Orsay)</name>
    <dbReference type="NCBI Taxonomy" id="272844"/>
    <lineage>
        <taxon>Archaea</taxon>
        <taxon>Methanobacteriati</taxon>
        <taxon>Methanobacteriota</taxon>
        <taxon>Thermococci</taxon>
        <taxon>Thermococcales</taxon>
        <taxon>Thermococcaceae</taxon>
        <taxon>Pyrococcus</taxon>
    </lineage>
</organism>
<reference key="1">
    <citation type="journal article" date="2003" name="Mol. Microbiol.">
        <title>An integrated analysis of the genome of the hyperthermophilic archaeon Pyrococcus abyssi.</title>
        <authorList>
            <person name="Cohen G.N."/>
            <person name="Barbe V."/>
            <person name="Flament D."/>
            <person name="Galperin M."/>
            <person name="Heilig R."/>
            <person name="Lecompte O."/>
            <person name="Poch O."/>
            <person name="Prieur D."/>
            <person name="Querellou J."/>
            <person name="Ripp R."/>
            <person name="Thierry J.-C."/>
            <person name="Van der Oost J."/>
            <person name="Weissenbach J."/>
            <person name="Zivanovic Y."/>
            <person name="Forterre P."/>
        </authorList>
    </citation>
    <scope>NUCLEOTIDE SEQUENCE [LARGE SCALE GENOMIC DNA]</scope>
    <source>
        <strain>GE5 / Orsay</strain>
    </source>
</reference>
<reference key="2">
    <citation type="journal article" date="2012" name="Curr. Microbiol.">
        <title>Re-annotation of two hyperthermophilic archaea Pyrococcus abyssi GE5 and Pyrococcus furiosus DSM 3638.</title>
        <authorList>
            <person name="Gao J."/>
            <person name="Wang J."/>
        </authorList>
    </citation>
    <scope>GENOME REANNOTATION</scope>
    <source>
        <strain>GE5 / Orsay</strain>
    </source>
</reference>
<accession>Q9UXZ0</accession>
<accession>G8ZK82</accession>
<proteinExistence type="inferred from homology"/>
<protein>
    <recommendedName>
        <fullName evidence="1">Enolase</fullName>
        <ecNumber evidence="1">4.2.1.11</ecNumber>
    </recommendedName>
    <alternativeName>
        <fullName evidence="1">2-phospho-D-glycerate hydro-lyase</fullName>
    </alternativeName>
    <alternativeName>
        <fullName evidence="1">2-phosphoglycerate dehydratase</fullName>
    </alternativeName>
</protein>
<feature type="chain" id="PRO_0000134029" description="Enolase">
    <location>
        <begin position="1"/>
        <end position="428"/>
    </location>
</feature>
<feature type="active site" description="Proton donor" evidence="1">
    <location>
        <position position="208"/>
    </location>
</feature>
<feature type="active site" description="Proton acceptor" evidence="1">
    <location>
        <position position="338"/>
    </location>
</feature>
<feature type="binding site" evidence="1">
    <location>
        <position position="164"/>
    </location>
    <ligand>
        <name>(2R)-2-phosphoglycerate</name>
        <dbReference type="ChEBI" id="CHEBI:58289"/>
    </ligand>
</feature>
<feature type="binding site" evidence="1">
    <location>
        <position position="245"/>
    </location>
    <ligand>
        <name>Mg(2+)</name>
        <dbReference type="ChEBI" id="CHEBI:18420"/>
    </ligand>
</feature>
<feature type="binding site" evidence="1">
    <location>
        <position position="286"/>
    </location>
    <ligand>
        <name>Mg(2+)</name>
        <dbReference type="ChEBI" id="CHEBI:18420"/>
    </ligand>
</feature>
<feature type="binding site" evidence="1">
    <location>
        <position position="313"/>
    </location>
    <ligand>
        <name>Mg(2+)</name>
        <dbReference type="ChEBI" id="CHEBI:18420"/>
    </ligand>
</feature>
<feature type="binding site" evidence="1">
    <location>
        <position position="338"/>
    </location>
    <ligand>
        <name>(2R)-2-phosphoglycerate</name>
        <dbReference type="ChEBI" id="CHEBI:58289"/>
    </ligand>
</feature>
<feature type="binding site" evidence="1">
    <location>
        <position position="367"/>
    </location>
    <ligand>
        <name>(2R)-2-phosphoglycerate</name>
        <dbReference type="ChEBI" id="CHEBI:58289"/>
    </ligand>
</feature>
<feature type="binding site" evidence="1">
    <location>
        <position position="368"/>
    </location>
    <ligand>
        <name>(2R)-2-phosphoglycerate</name>
        <dbReference type="ChEBI" id="CHEBI:58289"/>
    </ligand>
</feature>
<feature type="binding site" evidence="1">
    <location>
        <position position="389"/>
    </location>
    <ligand>
        <name>(2R)-2-phosphoglycerate</name>
        <dbReference type="ChEBI" id="CHEBI:58289"/>
    </ligand>
</feature>
<name>ENO_PYRAB</name>